<name>PLSX_DESHY</name>
<feature type="chain" id="PRO_0000329220" description="Phosphate acyltransferase">
    <location>
        <begin position="1"/>
        <end position="335"/>
    </location>
</feature>
<gene>
    <name evidence="1" type="primary">plsX</name>
    <name type="ordered locus">DSY2664</name>
</gene>
<accession>Q24U39</accession>
<protein>
    <recommendedName>
        <fullName evidence="1">Phosphate acyltransferase</fullName>
        <ecNumber evidence="1">2.3.1.274</ecNumber>
    </recommendedName>
    <alternativeName>
        <fullName evidence="1">Acyl-ACP phosphotransacylase</fullName>
    </alternativeName>
    <alternativeName>
        <fullName evidence="1">Acyl-[acyl-carrier-protein]--phosphate acyltransferase</fullName>
    </alternativeName>
    <alternativeName>
        <fullName evidence="1">Phosphate-acyl-ACP acyltransferase</fullName>
    </alternativeName>
</protein>
<evidence type="ECO:0000255" key="1">
    <source>
        <dbReference type="HAMAP-Rule" id="MF_00019"/>
    </source>
</evidence>
<sequence length="335" mass="35690">MMRIAVDAMGGDHAPAEIVKGALRSIEQFDIEVILVGQPERIKEFLPQGEVPARVRIKEATEVVEMDEHPAQAVRRKKDSSIVVATRLVKEGEADALVSAGSTGAQMAASLLGLGRIKGIDRPAIVTVLPTLEGGKLLLDVGANPDAKPEHLVQYAMMGSIYAESILGIQNPKVGLLNIGTEETKGNELTQATYPLLQKAPLNFIGNVEGRAIPYGQAADVVVCEGFVGNVVLKTTEGLAGALFQLIKEKITATPLRKLGALAIKPGLKEIAKMMDYAEYGGAPLLGVHGISIISHGSSNEKAIFNAIRVAKECVESGFIEEIKKELPRFTAAQE</sequence>
<proteinExistence type="inferred from homology"/>
<organism>
    <name type="scientific">Desulfitobacterium hafniense (strain Y51)</name>
    <dbReference type="NCBI Taxonomy" id="138119"/>
    <lineage>
        <taxon>Bacteria</taxon>
        <taxon>Bacillati</taxon>
        <taxon>Bacillota</taxon>
        <taxon>Clostridia</taxon>
        <taxon>Eubacteriales</taxon>
        <taxon>Desulfitobacteriaceae</taxon>
        <taxon>Desulfitobacterium</taxon>
    </lineage>
</organism>
<comment type="function">
    <text evidence="1">Catalyzes the reversible formation of acyl-phosphate (acyl-PO(4)) from acyl-[acyl-carrier-protein] (acyl-ACP). This enzyme utilizes acyl-ACP as fatty acyl donor, but not acyl-CoA.</text>
</comment>
<comment type="catalytic activity">
    <reaction evidence="1">
        <text>a fatty acyl-[ACP] + phosphate = an acyl phosphate + holo-[ACP]</text>
        <dbReference type="Rhea" id="RHEA:42292"/>
        <dbReference type="Rhea" id="RHEA-COMP:9685"/>
        <dbReference type="Rhea" id="RHEA-COMP:14125"/>
        <dbReference type="ChEBI" id="CHEBI:43474"/>
        <dbReference type="ChEBI" id="CHEBI:59918"/>
        <dbReference type="ChEBI" id="CHEBI:64479"/>
        <dbReference type="ChEBI" id="CHEBI:138651"/>
        <dbReference type="EC" id="2.3.1.274"/>
    </reaction>
</comment>
<comment type="pathway">
    <text evidence="1">Lipid metabolism; phospholipid metabolism.</text>
</comment>
<comment type="subunit">
    <text evidence="1">Homodimer. Probably interacts with PlsY.</text>
</comment>
<comment type="subcellular location">
    <subcellularLocation>
        <location evidence="1">Cytoplasm</location>
    </subcellularLocation>
    <text evidence="1">Associated with the membrane possibly through PlsY.</text>
</comment>
<comment type="similarity">
    <text evidence="1">Belongs to the PlsX family.</text>
</comment>
<reference key="1">
    <citation type="journal article" date="2006" name="J. Bacteriol.">
        <title>Complete genome sequence of the dehalorespiring bacterium Desulfitobacterium hafniense Y51 and comparison with Dehalococcoides ethenogenes 195.</title>
        <authorList>
            <person name="Nonaka H."/>
            <person name="Keresztes G."/>
            <person name="Shinoda Y."/>
            <person name="Ikenaga Y."/>
            <person name="Abe M."/>
            <person name="Naito K."/>
            <person name="Inatomi K."/>
            <person name="Furukawa K."/>
            <person name="Inui M."/>
            <person name="Yukawa H."/>
        </authorList>
    </citation>
    <scope>NUCLEOTIDE SEQUENCE [LARGE SCALE GENOMIC DNA]</scope>
    <source>
        <strain>Y51</strain>
    </source>
</reference>
<keyword id="KW-0963">Cytoplasm</keyword>
<keyword id="KW-0444">Lipid biosynthesis</keyword>
<keyword id="KW-0443">Lipid metabolism</keyword>
<keyword id="KW-0594">Phospholipid biosynthesis</keyword>
<keyword id="KW-1208">Phospholipid metabolism</keyword>
<keyword id="KW-1185">Reference proteome</keyword>
<keyword id="KW-0808">Transferase</keyword>
<dbReference type="EC" id="2.3.1.274" evidence="1"/>
<dbReference type="EMBL" id="AP008230">
    <property type="protein sequence ID" value="BAE84453.1"/>
    <property type="molecule type" value="Genomic_DNA"/>
</dbReference>
<dbReference type="SMR" id="Q24U39"/>
<dbReference type="STRING" id="138119.DSY2664"/>
<dbReference type="KEGG" id="dsy:DSY2664"/>
<dbReference type="eggNOG" id="COG0416">
    <property type="taxonomic scope" value="Bacteria"/>
</dbReference>
<dbReference type="HOGENOM" id="CLU_039379_1_1_9"/>
<dbReference type="UniPathway" id="UPA00085"/>
<dbReference type="Proteomes" id="UP000001946">
    <property type="component" value="Chromosome"/>
</dbReference>
<dbReference type="GO" id="GO:0005737">
    <property type="term" value="C:cytoplasm"/>
    <property type="evidence" value="ECO:0007669"/>
    <property type="project" value="UniProtKB-SubCell"/>
</dbReference>
<dbReference type="GO" id="GO:0043811">
    <property type="term" value="F:phosphate:acyl-[acyl carrier protein] acyltransferase activity"/>
    <property type="evidence" value="ECO:0007669"/>
    <property type="project" value="UniProtKB-UniRule"/>
</dbReference>
<dbReference type="GO" id="GO:0006633">
    <property type="term" value="P:fatty acid biosynthetic process"/>
    <property type="evidence" value="ECO:0007669"/>
    <property type="project" value="UniProtKB-UniRule"/>
</dbReference>
<dbReference type="GO" id="GO:0008654">
    <property type="term" value="P:phospholipid biosynthetic process"/>
    <property type="evidence" value="ECO:0007669"/>
    <property type="project" value="UniProtKB-KW"/>
</dbReference>
<dbReference type="Gene3D" id="3.40.718.10">
    <property type="entry name" value="Isopropylmalate Dehydrogenase"/>
    <property type="match status" value="1"/>
</dbReference>
<dbReference type="HAMAP" id="MF_00019">
    <property type="entry name" value="PlsX"/>
    <property type="match status" value="1"/>
</dbReference>
<dbReference type="InterPro" id="IPR003664">
    <property type="entry name" value="FA_synthesis"/>
</dbReference>
<dbReference type="InterPro" id="IPR012281">
    <property type="entry name" value="Phospholipid_synth_PlsX-like"/>
</dbReference>
<dbReference type="NCBIfam" id="TIGR00182">
    <property type="entry name" value="plsX"/>
    <property type="match status" value="1"/>
</dbReference>
<dbReference type="PANTHER" id="PTHR30100">
    <property type="entry name" value="FATTY ACID/PHOSPHOLIPID SYNTHESIS PROTEIN PLSX"/>
    <property type="match status" value="1"/>
</dbReference>
<dbReference type="PANTHER" id="PTHR30100:SF1">
    <property type="entry name" value="PHOSPHATE ACYLTRANSFERASE"/>
    <property type="match status" value="1"/>
</dbReference>
<dbReference type="Pfam" id="PF02504">
    <property type="entry name" value="FA_synthesis"/>
    <property type="match status" value="1"/>
</dbReference>
<dbReference type="PIRSF" id="PIRSF002465">
    <property type="entry name" value="Phsphlp_syn_PlsX"/>
    <property type="match status" value="1"/>
</dbReference>
<dbReference type="SUPFAM" id="SSF53659">
    <property type="entry name" value="Isocitrate/Isopropylmalate dehydrogenase-like"/>
    <property type="match status" value="1"/>
</dbReference>